<keyword id="KW-1185">Reference proteome</keyword>
<sequence>MQQPYEYRYPQGTGPSAPPPPPKAGVIVDPKYCSLHPVDLAIVRKVLKITDGNFVITNAEGNLLFKVKDPFFSLHEKRILMDGFGTKVLTLKGKIMTMHDRWLVFRGGSTEEVDLLYTVKRSNMVQITTKLDVFLADNIEQKKCDYRLEGVWLETSCFVYAGDSDIILAQMREKKTMQSVLFGKDNFCLTVNPNVDYAFIASLIVILVEIQISLRKLTKQLLLE</sequence>
<dbReference type="EMBL" id="AC010164">
    <property type="protein sequence ID" value="AAF97296.1"/>
    <property type="status" value="ALT_SEQ"/>
    <property type="molecule type" value="Genomic_DNA"/>
</dbReference>
<dbReference type="EMBL" id="AC022288">
    <property type="protein sequence ID" value="AAG52207.1"/>
    <property type="status" value="ALT_SEQ"/>
    <property type="molecule type" value="Genomic_DNA"/>
</dbReference>
<dbReference type="EMBL" id="CP002684">
    <property type="status" value="NOT_ANNOTATED_CDS"/>
    <property type="molecule type" value="Genomic_DNA"/>
</dbReference>
<dbReference type="PIR" id="B86462">
    <property type="entry name" value="B86462"/>
</dbReference>
<dbReference type="RefSeq" id="NP_001322973.1">
    <property type="nucleotide sequence ID" value="NM_001333068.1"/>
</dbReference>
<dbReference type="SMR" id="Q9LQ36"/>
<dbReference type="STRING" id="3702.Q9LQ36"/>
<dbReference type="PaxDb" id="3702-AT1G33840.1"/>
<dbReference type="GeneID" id="840280"/>
<dbReference type="KEGG" id="ath:AT1G33840"/>
<dbReference type="Araport" id="AT1G33840"/>
<dbReference type="TAIR" id="AT1G33840"/>
<dbReference type="eggNOG" id="ENOG502QUU9">
    <property type="taxonomic scope" value="Eukaryota"/>
</dbReference>
<dbReference type="HOGENOM" id="CLU_063146_5_1_1"/>
<dbReference type="InParanoid" id="Q9LQ36"/>
<dbReference type="PRO" id="PR:Q9LQ36"/>
<dbReference type="Proteomes" id="UP000006548">
    <property type="component" value="Chromosome 1"/>
</dbReference>
<dbReference type="ExpressionAtlas" id="Q9LQ36">
    <property type="expression patterns" value="baseline and differential"/>
</dbReference>
<dbReference type="Gene3D" id="2.40.160.200">
    <property type="entry name" value="LURP1-related"/>
    <property type="match status" value="1"/>
</dbReference>
<dbReference type="InterPro" id="IPR007612">
    <property type="entry name" value="LOR"/>
</dbReference>
<dbReference type="InterPro" id="IPR038595">
    <property type="entry name" value="LOR_sf"/>
</dbReference>
<dbReference type="InterPro" id="IPR025659">
    <property type="entry name" value="Tubby-like_C"/>
</dbReference>
<dbReference type="PANTHER" id="PTHR31087">
    <property type="match status" value="1"/>
</dbReference>
<dbReference type="PANTHER" id="PTHR31087:SF160">
    <property type="entry name" value="PROTEIN LURP-ONE-RELATED 1-RELATED"/>
    <property type="match status" value="1"/>
</dbReference>
<dbReference type="Pfam" id="PF04525">
    <property type="entry name" value="LOR"/>
    <property type="match status" value="1"/>
</dbReference>
<dbReference type="SUPFAM" id="SSF54518">
    <property type="entry name" value="Tubby C-terminal domain-like"/>
    <property type="match status" value="1"/>
</dbReference>
<proteinExistence type="inferred from homology"/>
<protein>
    <recommendedName>
        <fullName>Protein LURP-one-related 1</fullName>
    </recommendedName>
</protein>
<feature type="chain" id="PRO_0000399233" description="Protein LURP-one-related 1">
    <location>
        <begin position="1"/>
        <end position="224"/>
    </location>
</feature>
<feature type="region of interest" description="Disordered" evidence="2">
    <location>
        <begin position="1"/>
        <end position="23"/>
    </location>
</feature>
<gene>
    <name type="ordered locus">At1g33840</name>
    <name type="ORF">F14M2.3</name>
    <name type="ORF">T3M13.14</name>
</gene>
<comment type="function">
    <text evidence="1">Might be related to the phospholipid scramblase and tubby-like superfamily of membrane tethered transcription factors.</text>
</comment>
<comment type="similarity">
    <text evidence="3">Belongs to the LOR family.</text>
</comment>
<comment type="sequence caution" evidence="3">
    <conflict type="erroneous gene model prediction">
        <sequence resource="EMBL-CDS" id="AAF97296"/>
    </conflict>
</comment>
<comment type="sequence caution" evidence="3">
    <conflict type="erroneous gene model prediction">
        <sequence resource="EMBL-CDS" id="AAG52207"/>
    </conflict>
</comment>
<reference key="1">
    <citation type="journal article" date="2000" name="Nature">
        <title>Sequence and analysis of chromosome 1 of the plant Arabidopsis thaliana.</title>
        <authorList>
            <person name="Theologis A."/>
            <person name="Ecker J.R."/>
            <person name="Palm C.J."/>
            <person name="Federspiel N.A."/>
            <person name="Kaul S."/>
            <person name="White O."/>
            <person name="Alonso J."/>
            <person name="Altafi H."/>
            <person name="Araujo R."/>
            <person name="Bowman C.L."/>
            <person name="Brooks S.Y."/>
            <person name="Buehler E."/>
            <person name="Chan A."/>
            <person name="Chao Q."/>
            <person name="Chen H."/>
            <person name="Cheuk R.F."/>
            <person name="Chin C.W."/>
            <person name="Chung M.K."/>
            <person name="Conn L."/>
            <person name="Conway A.B."/>
            <person name="Conway A.R."/>
            <person name="Creasy T.H."/>
            <person name="Dewar K."/>
            <person name="Dunn P."/>
            <person name="Etgu P."/>
            <person name="Feldblyum T.V."/>
            <person name="Feng J.-D."/>
            <person name="Fong B."/>
            <person name="Fujii C.Y."/>
            <person name="Gill J.E."/>
            <person name="Goldsmith A.D."/>
            <person name="Haas B."/>
            <person name="Hansen N.F."/>
            <person name="Hughes B."/>
            <person name="Huizar L."/>
            <person name="Hunter J.L."/>
            <person name="Jenkins J."/>
            <person name="Johnson-Hopson C."/>
            <person name="Khan S."/>
            <person name="Khaykin E."/>
            <person name="Kim C.J."/>
            <person name="Koo H.L."/>
            <person name="Kremenetskaia I."/>
            <person name="Kurtz D.B."/>
            <person name="Kwan A."/>
            <person name="Lam B."/>
            <person name="Langin-Hooper S."/>
            <person name="Lee A."/>
            <person name="Lee J.M."/>
            <person name="Lenz C.A."/>
            <person name="Li J.H."/>
            <person name="Li Y.-P."/>
            <person name="Lin X."/>
            <person name="Liu S.X."/>
            <person name="Liu Z.A."/>
            <person name="Luros J.S."/>
            <person name="Maiti R."/>
            <person name="Marziali A."/>
            <person name="Militscher J."/>
            <person name="Miranda M."/>
            <person name="Nguyen M."/>
            <person name="Nierman W.C."/>
            <person name="Osborne B.I."/>
            <person name="Pai G."/>
            <person name="Peterson J."/>
            <person name="Pham P.K."/>
            <person name="Rizzo M."/>
            <person name="Rooney T."/>
            <person name="Rowley D."/>
            <person name="Sakano H."/>
            <person name="Salzberg S.L."/>
            <person name="Schwartz J.R."/>
            <person name="Shinn P."/>
            <person name="Southwick A.M."/>
            <person name="Sun H."/>
            <person name="Tallon L.J."/>
            <person name="Tambunga G."/>
            <person name="Toriumi M.J."/>
            <person name="Town C.D."/>
            <person name="Utterback T."/>
            <person name="Van Aken S."/>
            <person name="Vaysberg M."/>
            <person name="Vysotskaia V.S."/>
            <person name="Walker M."/>
            <person name="Wu D."/>
            <person name="Yu G."/>
            <person name="Fraser C.M."/>
            <person name="Venter J.C."/>
            <person name="Davis R.W."/>
        </authorList>
    </citation>
    <scope>NUCLEOTIDE SEQUENCE [LARGE SCALE GENOMIC DNA]</scope>
    <source>
        <strain>cv. Columbia</strain>
    </source>
</reference>
<reference key="2">
    <citation type="journal article" date="2017" name="Plant J.">
        <title>Araport11: a complete reannotation of the Arabidopsis thaliana reference genome.</title>
        <authorList>
            <person name="Cheng C.Y."/>
            <person name="Krishnakumar V."/>
            <person name="Chan A.P."/>
            <person name="Thibaud-Nissen F."/>
            <person name="Schobel S."/>
            <person name="Town C.D."/>
        </authorList>
    </citation>
    <scope>GENOME REANNOTATION</scope>
    <source>
        <strain>cv. Columbia</strain>
    </source>
</reference>
<evidence type="ECO:0000250" key="1"/>
<evidence type="ECO:0000256" key="2">
    <source>
        <dbReference type="SAM" id="MobiDB-lite"/>
    </source>
</evidence>
<evidence type="ECO:0000305" key="3"/>
<accession>Q9LQ36</accession>
<accession>F4HT04</accession>
<accession>Q9C8U3</accession>
<name>LOR1_ARATH</name>
<organism>
    <name type="scientific">Arabidopsis thaliana</name>
    <name type="common">Mouse-ear cress</name>
    <dbReference type="NCBI Taxonomy" id="3702"/>
    <lineage>
        <taxon>Eukaryota</taxon>
        <taxon>Viridiplantae</taxon>
        <taxon>Streptophyta</taxon>
        <taxon>Embryophyta</taxon>
        <taxon>Tracheophyta</taxon>
        <taxon>Spermatophyta</taxon>
        <taxon>Magnoliopsida</taxon>
        <taxon>eudicotyledons</taxon>
        <taxon>Gunneridae</taxon>
        <taxon>Pentapetalae</taxon>
        <taxon>rosids</taxon>
        <taxon>malvids</taxon>
        <taxon>Brassicales</taxon>
        <taxon>Brassicaceae</taxon>
        <taxon>Camelineae</taxon>
        <taxon>Arabidopsis</taxon>
    </lineage>
</organism>